<evidence type="ECO:0000250" key="1">
    <source>
        <dbReference type="UniProtKB" id="P84293"/>
    </source>
</evidence>
<evidence type="ECO:0000269" key="2">
    <source ref="1"/>
</evidence>
<evidence type="ECO:0000303" key="3">
    <source ref="1"/>
</evidence>
<evidence type="ECO:0000305" key="4"/>
<feature type="chain" id="PRO_0000204278" description="Hemocyanin subunit 1">
    <location>
        <begin position="1"/>
        <end position="12" status="greater than"/>
    </location>
</feature>
<feature type="non-terminal residue" evidence="3">
    <location>
        <position position="12"/>
    </location>
</feature>
<keyword id="KW-0186">Copper</keyword>
<keyword id="KW-0903">Direct protein sequencing</keyword>
<keyword id="KW-0561">Oxygen transport</keyword>
<keyword id="KW-0964">Secreted</keyword>
<keyword id="KW-0813">Transport</keyword>
<protein>
    <recommendedName>
        <fullName>Hemocyanin subunit 1</fullName>
    </recommendedName>
</protein>
<name>HCY1_LIODE</name>
<accession>P84461</accession>
<sequence>DSPGGASDAQKQ</sequence>
<dbReference type="GO" id="GO:0005615">
    <property type="term" value="C:extracellular space"/>
    <property type="evidence" value="ECO:0000314"/>
    <property type="project" value="UniProtKB"/>
</dbReference>
<dbReference type="GO" id="GO:0005344">
    <property type="term" value="F:oxygen carrier activity"/>
    <property type="evidence" value="ECO:0007669"/>
    <property type="project" value="UniProtKB-KW"/>
</dbReference>
<proteinExistence type="evidence at protein level"/>
<comment type="function">
    <text evidence="1">Hemocyanins are copper-containing oxygen carriers occurring freely dissolved in the hemolymph of many mollusks and arthropods.</text>
</comment>
<comment type="subcellular location">
    <subcellularLocation>
        <location evidence="1">Secreted</location>
        <location evidence="1">Extracellular space</location>
    </subcellularLocation>
</comment>
<comment type="tissue specificity">
    <text evidence="2">Hemolymph.</text>
</comment>
<comment type="similarity">
    <text evidence="4">Belongs to the tyrosinase family. Hemocyanin subfamily.</text>
</comment>
<organism>
    <name type="scientific">Liocarcinus depurator</name>
    <name type="common">Harbour crab</name>
    <name type="synonym">Portunus depurator</name>
    <dbReference type="NCBI Taxonomy" id="313354"/>
    <lineage>
        <taxon>Eukaryota</taxon>
        <taxon>Metazoa</taxon>
        <taxon>Ecdysozoa</taxon>
        <taxon>Arthropoda</taxon>
        <taxon>Crustacea</taxon>
        <taxon>Multicrustacea</taxon>
        <taxon>Malacostraca</taxon>
        <taxon>Eumalacostraca</taxon>
        <taxon>Eucarida</taxon>
        <taxon>Decapoda</taxon>
        <taxon>Pleocyemata</taxon>
        <taxon>Brachyura</taxon>
        <taxon>Eubrachyura</taxon>
        <taxon>Portunoidea</taxon>
        <taxon>Polybiidae</taxon>
        <taxon>Liocarcinus</taxon>
    </lineage>
</organism>
<reference evidence="4" key="1">
    <citation type="journal article" date="2007" name="Mar. Biol.">
        <title>Structural and functional heterogeneity of hemocyanin: intra- and inter-specific comparison in four species of portunid crabs (Crustacea: Portunidae).</title>
        <authorList>
            <person name="Giomi F."/>
            <person name="Raicevich S."/>
            <person name="Ferrarese A."/>
            <person name="Pranovi F."/>
            <person name="Di Muro P."/>
            <person name="Beltramin K."/>
        </authorList>
    </citation>
    <scope>PROTEIN SEQUENCE</scope>
    <scope>TISSUE SPECIFICITY</scope>
    <source>
        <tissue evidence="2">Hemolymph</tissue>
    </source>
</reference>